<name>SPRTL_STRPQ</name>
<feature type="chain" id="PRO_0000411577" description="Protein SprT-like">
    <location>
        <begin position="1"/>
        <end position="145"/>
    </location>
</feature>
<feature type="domain" description="SprT-like" evidence="1">
    <location>
        <begin position="4"/>
        <end position="140"/>
    </location>
</feature>
<feature type="active site" evidence="1">
    <location>
        <position position="65"/>
    </location>
</feature>
<feature type="binding site" evidence="1">
    <location>
        <position position="64"/>
    </location>
    <ligand>
        <name>Zn(2+)</name>
        <dbReference type="ChEBI" id="CHEBI:29105"/>
    </ligand>
</feature>
<feature type="binding site" evidence="1">
    <location>
        <position position="68"/>
    </location>
    <ligand>
        <name>Zn(2+)</name>
        <dbReference type="ChEBI" id="CHEBI:29105"/>
    </ligand>
</feature>
<comment type="cofactor">
    <cofactor evidence="1">
        <name>Zn(2+)</name>
        <dbReference type="ChEBI" id="CHEBI:29105"/>
    </cofactor>
    <text evidence="1">Binds 1 zinc ion.</text>
</comment>
<comment type="subcellular location">
    <subcellularLocation>
        <location evidence="1">Cytoplasm</location>
    </subcellularLocation>
</comment>
<comment type="similarity">
    <text evidence="1">Belongs to the SprT family.</text>
</comment>
<comment type="sequence caution" evidence="2">
    <conflict type="erroneous initiation">
        <sequence resource="EMBL-CDS" id="BAC64540"/>
    </conflict>
</comment>
<keyword id="KW-0963">Cytoplasm</keyword>
<keyword id="KW-0479">Metal-binding</keyword>
<keyword id="KW-0862">Zinc</keyword>
<gene>
    <name type="ordered locus">SPs1445</name>
</gene>
<reference key="1">
    <citation type="journal article" date="2003" name="Genome Res.">
        <title>Genome sequence of an M3 strain of Streptococcus pyogenes reveals a large-scale genomic rearrangement in invasive strains and new insights into phage evolution.</title>
        <authorList>
            <person name="Nakagawa I."/>
            <person name="Kurokawa K."/>
            <person name="Yamashita A."/>
            <person name="Nakata M."/>
            <person name="Tomiyasu Y."/>
            <person name="Okahashi N."/>
            <person name="Kawabata S."/>
            <person name="Yamazaki K."/>
            <person name="Shiba T."/>
            <person name="Yasunaga T."/>
            <person name="Hayashi H."/>
            <person name="Hattori M."/>
            <person name="Hamada S."/>
        </authorList>
    </citation>
    <scope>NUCLEOTIDE SEQUENCE [LARGE SCALE GENOMIC DNA]</scope>
    <source>
        <strain>SSI-1</strain>
    </source>
</reference>
<protein>
    <recommendedName>
        <fullName evidence="1">Protein SprT-like</fullName>
    </recommendedName>
</protein>
<sequence length="145" mass="17229">MTLTNYVQEVSLADFGKPFHHKAYWNKRLKTTGGRFFPKDGHLDFNPRMLEEHGELIFRKIVRHELCHYHLYFEGRGYHHKDRDFKDLLAQVNGLRYVPTSSKSKTNHHYSCQTCGQVYQRKRRINLAKYVCGNCHGKLMEKNQS</sequence>
<proteinExistence type="inferred from homology"/>
<accession>P0DF75</accession>
<accession>Q8K886</accession>
<dbReference type="EMBL" id="BA000034">
    <property type="protein sequence ID" value="BAC64540.1"/>
    <property type="status" value="ALT_INIT"/>
    <property type="molecule type" value="Genomic_DNA"/>
</dbReference>
<dbReference type="RefSeq" id="WP_002990585.1">
    <property type="nucleotide sequence ID" value="NC_004606.1"/>
</dbReference>
<dbReference type="KEGG" id="sps:SPs1445"/>
<dbReference type="HOGENOM" id="CLU_123820_0_0_9"/>
<dbReference type="GO" id="GO:0005737">
    <property type="term" value="C:cytoplasm"/>
    <property type="evidence" value="ECO:0007669"/>
    <property type="project" value="UniProtKB-SubCell"/>
</dbReference>
<dbReference type="GO" id="GO:0008270">
    <property type="term" value="F:zinc ion binding"/>
    <property type="evidence" value="ECO:0007669"/>
    <property type="project" value="UniProtKB-UniRule"/>
</dbReference>
<dbReference type="GO" id="GO:0006950">
    <property type="term" value="P:response to stress"/>
    <property type="evidence" value="ECO:0007669"/>
    <property type="project" value="UniProtKB-ARBA"/>
</dbReference>
<dbReference type="HAMAP" id="MF_00745">
    <property type="entry name" value="SprT_like"/>
    <property type="match status" value="1"/>
</dbReference>
<dbReference type="InterPro" id="IPR006640">
    <property type="entry name" value="SprT-like_domain"/>
</dbReference>
<dbReference type="InterPro" id="IPR023524">
    <property type="entry name" value="Uncharacterised_SprT-like"/>
</dbReference>
<dbReference type="NCBIfam" id="NF003339">
    <property type="entry name" value="PRK04351.1"/>
    <property type="match status" value="1"/>
</dbReference>
<dbReference type="Pfam" id="PF10263">
    <property type="entry name" value="SprT-like"/>
    <property type="match status" value="1"/>
</dbReference>
<dbReference type="SMART" id="SM00731">
    <property type="entry name" value="SprT"/>
    <property type="match status" value="1"/>
</dbReference>
<evidence type="ECO:0000255" key="1">
    <source>
        <dbReference type="HAMAP-Rule" id="MF_00745"/>
    </source>
</evidence>
<evidence type="ECO:0000305" key="2"/>
<organism>
    <name type="scientific">Streptococcus pyogenes serotype M3 (strain SSI-1)</name>
    <dbReference type="NCBI Taxonomy" id="193567"/>
    <lineage>
        <taxon>Bacteria</taxon>
        <taxon>Bacillati</taxon>
        <taxon>Bacillota</taxon>
        <taxon>Bacilli</taxon>
        <taxon>Lactobacillales</taxon>
        <taxon>Streptococcaceae</taxon>
        <taxon>Streptococcus</taxon>
    </lineage>
</organism>